<keyword id="KW-0025">Alternative splicing</keyword>
<keyword id="KW-0378">Hydrolase</keyword>
<keyword id="KW-1017">Isopeptide bond</keyword>
<keyword id="KW-0460">Magnesium</keyword>
<keyword id="KW-0479">Metal-binding</keyword>
<keyword id="KW-1185">Reference proteome</keyword>
<keyword id="KW-0677">Repeat</keyword>
<keyword id="KW-0832">Ubl conjugation</keyword>
<keyword id="KW-0853">WD repeat</keyword>
<name>IP5PE_ARATH</name>
<organism>
    <name type="scientific">Arabidopsis thaliana</name>
    <name type="common">Mouse-ear cress</name>
    <dbReference type="NCBI Taxonomy" id="3702"/>
    <lineage>
        <taxon>Eukaryota</taxon>
        <taxon>Viridiplantae</taxon>
        <taxon>Streptophyta</taxon>
        <taxon>Embryophyta</taxon>
        <taxon>Tracheophyta</taxon>
        <taxon>Spermatophyta</taxon>
        <taxon>Magnoliopsida</taxon>
        <taxon>eudicotyledons</taxon>
        <taxon>Gunneridae</taxon>
        <taxon>Pentapetalae</taxon>
        <taxon>rosids</taxon>
        <taxon>malvids</taxon>
        <taxon>Brassicales</taxon>
        <taxon>Brassicaceae</taxon>
        <taxon>Camelineae</taxon>
        <taxon>Arabidopsis</taxon>
    </lineage>
</organism>
<protein>
    <recommendedName>
        <fullName evidence="5">Type II inositol polyphosphate 5-phosphatase 14</fullName>
        <shortName evidence="5">At5PTase14</shortName>
        <ecNumber evidence="4">3.1.3.36</ecNumber>
        <ecNumber evidence="4">3.1.3.86</ecNumber>
    </recommendedName>
</protein>
<feature type="chain" id="PRO_0000359744" description="Type II inositol polyphosphate 5-phosphatase 14">
    <location>
        <begin position="1"/>
        <end position="1144"/>
    </location>
</feature>
<feature type="repeat" description="WD 1">
    <location>
        <begin position="158"/>
        <end position="196"/>
    </location>
</feature>
<feature type="repeat" description="WD 2">
    <location>
        <begin position="216"/>
        <end position="255"/>
    </location>
</feature>
<feature type="repeat" description="WD 3">
    <location>
        <begin position="269"/>
        <end position="307"/>
    </location>
</feature>
<feature type="repeat" description="WD 4">
    <location>
        <begin position="445"/>
        <end position="483"/>
    </location>
</feature>
<feature type="repeat" description="WD 5">
    <location>
        <begin position="524"/>
        <end position="561"/>
    </location>
</feature>
<feature type="region of interest" description="Disordered" evidence="3">
    <location>
        <begin position="15"/>
        <end position="67"/>
    </location>
</feature>
<feature type="region of interest" description="Disordered" evidence="3">
    <location>
        <begin position="81"/>
        <end position="118"/>
    </location>
</feature>
<feature type="region of interest" description="Catalytic 1" evidence="2">
    <location>
        <begin position="791"/>
        <end position="807"/>
    </location>
</feature>
<feature type="region of interest" description="Catalytic 2" evidence="2">
    <location>
        <begin position="870"/>
        <end position="885"/>
    </location>
</feature>
<feature type="region of interest" description="Disordered" evidence="3">
    <location>
        <begin position="1111"/>
        <end position="1144"/>
    </location>
</feature>
<feature type="compositionally biased region" description="Polar residues" evidence="3">
    <location>
        <begin position="1111"/>
        <end position="1131"/>
    </location>
</feature>
<feature type="compositionally biased region" description="Basic and acidic residues" evidence="3">
    <location>
        <begin position="1135"/>
        <end position="1144"/>
    </location>
</feature>
<feature type="cross-link" description="Glycyl lysine isopeptide (Lys-Gly) (interchain with G-Cter in ubiquitin)" evidence="1">
    <location>
        <position position="949"/>
    </location>
</feature>
<sequence>MDSVIIEPDEREALASLVPAHPLPPRKTHSYVEQCEQKPHHPIRKYSLDEGSRSVTSDSEAVYFDSSDGEFSTEGVAIVDGRTSGERGNGEECGFVTPPSKPASQGGGNDGGREDDIESLPEFIGAGGGLDVFKVPVRAAVNPGRPPCLELRPHPLRETQTGKFLRNIACTESQLWAGQENGVRFWNLEEAYEVGCGLGGQVRRGDEDTAPFHESVPTSPALCLLVDHGNRLVWTGHKDGKIRAWKMNQPNTTTADDSKPFKERLSWQAHRGPVNYIVISSYGDMWSCSDGGVIKIWTLDSLEKSLVLKLEEKHMAALLVERSGIDLRSQVTVNGTCSISSSDVKFLLVDTVKAKVWAVQHLSFSLWDAQNKELLKVFNIDGQVENRVDMPPTQGQQVEDTKAKFFSAPKKEKSQGFLQRSRHAIMGAAGAVRRAATRSAGAFAEDTRKVEAIAIAADGSIWTGSMNGVIAQWDGNGSRLREVNHHQQAVLCFCTFGDRIYVGYSSGYIQVLDLGGKLIASWVSHNEPVIKLAAGGGFIFSLATHGGVRGWYVTSPGPLDSLIRTELSQKEMAYARQDSVKILIGTWNVGEGRASRGALVSWLGSAVSDVGIVAIGLQEVDMGAGFLAMSTAKETVGVEGSAVGQWWLDAIGNALDERNTFERMGSRQLAGLLISLWVRKSIRTHVGDLDVAAVPCGFGRAIGNKGGVGLRIRVYDRIMCFVNCHLAAHLEAVTRRNADFNHIYRSMVFSKGQSVYTAAAAGASTSAQALKNNPNTNNSTEEEKSHLASADLVAFFGDFNYRLFGITYDEARDFISHRSFDWLREKDQLRQEMNEGKVFQGMREALITFPPTYKFEKNKPGLGGYDSGEKKRIPAWCDRVIYRDNQSISYTECSLKCPVVSSTIMYEACMDVTESDHKPVRCKLHANIAHTDKSVRRQELGKIVKSNEKLRAMFEELKSVPETSVSTNNILLHSQDTFIFTIRNTSNSSRAIFNIVCKGQTLVREDGEEPDNHSRGTFGLPRWLEVSPGAGIIKPDASLQVKVHHEDSHNSEEFIDGIQQNSLSEESSDKEVTLIIIVQGSCSTRTISHSIKVRHCSSAAKSLSLVHSKTTTMTKNLEGSTRYQTDANRGGSTRHRTDDSTRRG</sequence>
<evidence type="ECO:0000250" key="1">
    <source>
        <dbReference type="UniProtKB" id="O80560"/>
    </source>
</evidence>
<evidence type="ECO:0000250" key="2">
    <source>
        <dbReference type="UniProtKB" id="Q84MA2"/>
    </source>
</evidence>
<evidence type="ECO:0000256" key="3">
    <source>
        <dbReference type="SAM" id="MobiDB-lite"/>
    </source>
</evidence>
<evidence type="ECO:0000269" key="4">
    <source>
    </source>
</evidence>
<evidence type="ECO:0000303" key="5">
    <source>
    </source>
</evidence>
<evidence type="ECO:0000305" key="6"/>
<evidence type="ECO:0000312" key="7">
    <source>
        <dbReference type="Araport" id="AT2G31830"/>
    </source>
</evidence>
<evidence type="ECO:0000312" key="8">
    <source>
        <dbReference type="EMBL" id="AAD32289.1"/>
    </source>
</evidence>
<reference key="1">
    <citation type="journal article" date="2004" name="Plant Cell Physiol.">
        <title>Molecular and biochemical characterization of three WD-repeat-domain-containing inositol polyphosphate 5-phosphatases in Arabidopsis thaliana.</title>
        <authorList>
            <person name="Zhong R."/>
            <person name="Ye Z.-H."/>
        </authorList>
    </citation>
    <scope>NUCLEOTIDE SEQUENCE [GENOMIC DNA / MRNA]</scope>
    <scope>FUNCTION</scope>
    <scope>TISSUE SPECIFICITY</scope>
    <scope>INDUCTION</scope>
    <scope>COFACTOR</scope>
    <scope>BIOPHYSICOCHEMICAL PROPERTIES</scope>
    <scope>CATALYTIC ACTIVITY</scope>
    <source>
        <strain>cv. Columbia</strain>
    </source>
</reference>
<reference key="2">
    <citation type="journal article" date="1999" name="Nature">
        <title>Sequence and analysis of chromosome 2 of the plant Arabidopsis thaliana.</title>
        <authorList>
            <person name="Lin X."/>
            <person name="Kaul S."/>
            <person name="Rounsley S.D."/>
            <person name="Shea T.P."/>
            <person name="Benito M.-I."/>
            <person name="Town C.D."/>
            <person name="Fujii C.Y."/>
            <person name="Mason T.M."/>
            <person name="Bowman C.L."/>
            <person name="Barnstead M.E."/>
            <person name="Feldblyum T.V."/>
            <person name="Buell C.R."/>
            <person name="Ketchum K.A."/>
            <person name="Lee J.J."/>
            <person name="Ronning C.M."/>
            <person name="Koo H.L."/>
            <person name="Moffat K.S."/>
            <person name="Cronin L.A."/>
            <person name="Shen M."/>
            <person name="Pai G."/>
            <person name="Van Aken S."/>
            <person name="Umayam L."/>
            <person name="Tallon L.J."/>
            <person name="Gill J.E."/>
            <person name="Adams M.D."/>
            <person name="Carrera A.J."/>
            <person name="Creasy T.H."/>
            <person name="Goodman H.M."/>
            <person name="Somerville C.R."/>
            <person name="Copenhaver G.P."/>
            <person name="Preuss D."/>
            <person name="Nierman W.C."/>
            <person name="White O."/>
            <person name="Eisen J.A."/>
            <person name="Salzberg S.L."/>
            <person name="Fraser C.M."/>
            <person name="Venter J.C."/>
        </authorList>
    </citation>
    <scope>NUCLEOTIDE SEQUENCE [LARGE SCALE GENOMIC DNA]</scope>
    <source>
        <strain>cv. Columbia</strain>
    </source>
</reference>
<reference key="3">
    <citation type="journal article" date="2017" name="Plant J.">
        <title>Araport11: a complete reannotation of the Arabidopsis thaliana reference genome.</title>
        <authorList>
            <person name="Cheng C.Y."/>
            <person name="Krishnakumar V."/>
            <person name="Chan A.P."/>
            <person name="Thibaud-Nissen F."/>
            <person name="Schobel S."/>
            <person name="Town C.D."/>
        </authorList>
    </citation>
    <scope>GENOME REANNOTATION</scope>
    <source>
        <strain>cv. Columbia</strain>
    </source>
</reference>
<reference key="4">
    <citation type="journal article" date="2001" name="Plant Physiol.">
        <title>Molecular characterization of At5PTase1, an inositol phosphatase capable of terminating inositol trisphosphate signaling.</title>
        <authorList>
            <person name="Berdy S.E."/>
            <person name="Kudla J."/>
            <person name="Gruissem W."/>
            <person name="Gillaspy G.E."/>
        </authorList>
    </citation>
    <scope>GENE FAMILY</scope>
</reference>
<comment type="function">
    <text evidence="4">Has phosphatase activity toward PtdIns(4,5)P2, PtdIns(3,4,5)P3 and Ins(1,4,5)P3.</text>
</comment>
<comment type="catalytic activity">
    <reaction evidence="4">
        <text>a 1,2-diacyl-sn-glycero-3-phospho-(1D-myo-inositol-4,5-bisphosphate) + H2O = a 1,2-diacyl-sn-glycero-3-phospho-(1D-myo-inositol 4-phosphate) + phosphate</text>
        <dbReference type="Rhea" id="RHEA:22764"/>
        <dbReference type="ChEBI" id="CHEBI:15377"/>
        <dbReference type="ChEBI" id="CHEBI:43474"/>
        <dbReference type="ChEBI" id="CHEBI:58178"/>
        <dbReference type="ChEBI" id="CHEBI:58456"/>
        <dbReference type="EC" id="3.1.3.36"/>
    </reaction>
</comment>
<comment type="catalytic activity">
    <reaction evidence="4">
        <text>a 1,2-diacyl-sn-glycero-3-phospho-(1D-myo-inositol-3,4,5-trisphosphate) + H2O = a 1,2-diacyl-sn-glycero-3-phospho-(1D-myo-inositol-3,4-bisphosphate) + phosphate</text>
        <dbReference type="Rhea" id="RHEA:25528"/>
        <dbReference type="ChEBI" id="CHEBI:15377"/>
        <dbReference type="ChEBI" id="CHEBI:43474"/>
        <dbReference type="ChEBI" id="CHEBI:57658"/>
        <dbReference type="ChEBI" id="CHEBI:57836"/>
        <dbReference type="EC" id="3.1.3.86"/>
    </reaction>
</comment>
<comment type="catalytic activity">
    <reaction evidence="4">
        <text>1D-myo-inositol 1,4,5-trisphosphate + H2O = 1D-myo-inositol 1,4-bisphosphate + phosphate</text>
        <dbReference type="Rhea" id="RHEA:19797"/>
        <dbReference type="ChEBI" id="CHEBI:15377"/>
        <dbReference type="ChEBI" id="CHEBI:43474"/>
        <dbReference type="ChEBI" id="CHEBI:58282"/>
        <dbReference type="ChEBI" id="CHEBI:203600"/>
    </reaction>
</comment>
<comment type="cofactor">
    <cofactor evidence="4">
        <name>Mg(2+)</name>
        <dbReference type="ChEBI" id="CHEBI:18420"/>
    </cofactor>
</comment>
<comment type="biophysicochemical properties">
    <kinetics>
        <KM evidence="4">101 uM for PtdIns(4,5)</KM>
        <KM evidence="4">211 uM for PtdIns(3,4,5)P3</KM>
        <KM evidence="4">395 uM for Ins(1,4,5)P3</KM>
    </kinetics>
</comment>
<comment type="alternative products">
    <event type="alternative splicing"/>
    <isoform>
        <id>Q9SKB7-1</id>
        <name>1</name>
        <sequence type="displayed"/>
    </isoform>
    <text>A number of isoforms are produced. According to EST sequences.</text>
</comment>
<comment type="tissue specificity">
    <text evidence="4">Expressed in young seedlings and flowers.</text>
</comment>
<comment type="induction">
    <text evidence="4">Slightly reduced by dark treatment.</text>
</comment>
<comment type="similarity">
    <text evidence="6">Belongs to the inositol polyphosphate 5-phosphatase family.</text>
</comment>
<gene>
    <name evidence="6" type="primary">IP5P14</name>
    <name type="synonym">5PTASE14</name>
    <name evidence="7" type="ordered locus">At2g31830</name>
    <name evidence="8" type="ORF">F20M17.13</name>
</gene>
<proteinExistence type="evidence at protein level"/>
<dbReference type="EC" id="3.1.3.36" evidence="4"/>
<dbReference type="EC" id="3.1.3.86" evidence="4"/>
<dbReference type="EMBL" id="AY761189">
    <property type="protein sequence ID" value="AAV87316.1"/>
    <property type="molecule type" value="mRNA"/>
</dbReference>
<dbReference type="EMBL" id="AY761193">
    <property type="protein sequence ID" value="AAV87320.1"/>
    <property type="molecule type" value="Genomic_DNA"/>
</dbReference>
<dbReference type="EMBL" id="AC006533">
    <property type="protein sequence ID" value="AAD32289.1"/>
    <property type="molecule type" value="Genomic_DNA"/>
</dbReference>
<dbReference type="EMBL" id="CP002685">
    <property type="protein sequence ID" value="AEC08590.1"/>
    <property type="molecule type" value="Genomic_DNA"/>
</dbReference>
<dbReference type="PIR" id="F84725">
    <property type="entry name" value="F84725"/>
</dbReference>
<dbReference type="RefSeq" id="NP_180742.1">
    <molecule id="Q9SKB7-1"/>
    <property type="nucleotide sequence ID" value="NM_128741.3"/>
</dbReference>
<dbReference type="SMR" id="Q9SKB7"/>
<dbReference type="STRING" id="3702.Q9SKB7"/>
<dbReference type="iPTMnet" id="Q9SKB7"/>
<dbReference type="PaxDb" id="3702-AT2G31830.2"/>
<dbReference type="ProteomicsDB" id="238946">
    <molecule id="Q9SKB7-1"/>
</dbReference>
<dbReference type="EnsemblPlants" id="AT2G31830.1">
    <molecule id="Q9SKB7-1"/>
    <property type="protein sequence ID" value="AT2G31830.1"/>
    <property type="gene ID" value="AT2G31830"/>
</dbReference>
<dbReference type="GeneID" id="817740"/>
<dbReference type="Gramene" id="AT2G31830.1">
    <molecule id="Q9SKB7-1"/>
    <property type="protein sequence ID" value="AT2G31830.1"/>
    <property type="gene ID" value="AT2G31830"/>
</dbReference>
<dbReference type="KEGG" id="ath:AT2G31830"/>
<dbReference type="Araport" id="AT2G31830"/>
<dbReference type="TAIR" id="AT2G31830">
    <property type="gene designation" value="5PTASE14"/>
</dbReference>
<dbReference type="eggNOG" id="KOG0565">
    <property type="taxonomic scope" value="Eukaryota"/>
</dbReference>
<dbReference type="HOGENOM" id="CLU_004721_0_1_1"/>
<dbReference type="InParanoid" id="Q9SKB7"/>
<dbReference type="OMA" id="QYEQKPH"/>
<dbReference type="OrthoDB" id="1925875at2759"/>
<dbReference type="PhylomeDB" id="Q9SKB7"/>
<dbReference type="BRENDA" id="3.1.3.36">
    <property type="organism ID" value="399"/>
</dbReference>
<dbReference type="SABIO-RK" id="Q9SKB7"/>
<dbReference type="PRO" id="PR:Q9SKB7"/>
<dbReference type="Proteomes" id="UP000006548">
    <property type="component" value="Chromosome 2"/>
</dbReference>
<dbReference type="ExpressionAtlas" id="Q9SKB7">
    <property type="expression patterns" value="baseline and differential"/>
</dbReference>
<dbReference type="GO" id="GO:0052658">
    <property type="term" value="F:inositol-1,4,5-trisphosphate 5-phosphatase activity"/>
    <property type="evidence" value="ECO:0007669"/>
    <property type="project" value="RHEA"/>
</dbReference>
<dbReference type="GO" id="GO:0046872">
    <property type="term" value="F:metal ion binding"/>
    <property type="evidence" value="ECO:0007669"/>
    <property type="project" value="UniProtKB-KW"/>
</dbReference>
<dbReference type="GO" id="GO:0034485">
    <property type="term" value="F:phosphatidylinositol-3,4,5-trisphosphate 5-phosphatase activity"/>
    <property type="evidence" value="ECO:0007669"/>
    <property type="project" value="UniProtKB-EC"/>
</dbReference>
<dbReference type="GO" id="GO:0004439">
    <property type="term" value="F:phosphatidylinositol-4,5-bisphosphate 5-phosphatase activity"/>
    <property type="evidence" value="ECO:0007669"/>
    <property type="project" value="UniProtKB-EC"/>
</dbReference>
<dbReference type="GO" id="GO:0046856">
    <property type="term" value="P:phosphatidylinositol dephosphorylation"/>
    <property type="evidence" value="ECO:0007669"/>
    <property type="project" value="InterPro"/>
</dbReference>
<dbReference type="CDD" id="cd09074">
    <property type="entry name" value="INPP5c"/>
    <property type="match status" value="1"/>
</dbReference>
<dbReference type="FunFam" id="2.130.10.10:FF:000677">
    <property type="entry name" value="Type I inositol polyphosphate 5-phosphatase 13"/>
    <property type="match status" value="1"/>
</dbReference>
<dbReference type="FunFam" id="2.130.10.10:FF:001061">
    <property type="entry name" value="Type I inositol polyphosphate 5-phosphatase 13"/>
    <property type="match status" value="1"/>
</dbReference>
<dbReference type="FunFam" id="3.60.10.10:FF:000011">
    <property type="entry name" value="Type II inositol polyphosphate 5-phosphatase 15"/>
    <property type="match status" value="1"/>
</dbReference>
<dbReference type="Gene3D" id="3.60.10.10">
    <property type="entry name" value="Endonuclease/exonuclease/phosphatase"/>
    <property type="match status" value="1"/>
</dbReference>
<dbReference type="Gene3D" id="2.130.10.10">
    <property type="entry name" value="YVTN repeat-like/Quinoprotein amine dehydrogenase"/>
    <property type="match status" value="2"/>
</dbReference>
<dbReference type="InterPro" id="IPR056454">
    <property type="entry name" value="Beta-prop_IP5PC_F"/>
</dbReference>
<dbReference type="InterPro" id="IPR036691">
    <property type="entry name" value="Endo/exonu/phosph_ase_sf"/>
</dbReference>
<dbReference type="InterPro" id="IPR056455">
    <property type="entry name" value="Ig-like_IP5PC_F"/>
</dbReference>
<dbReference type="InterPro" id="IPR046985">
    <property type="entry name" value="IP5"/>
</dbReference>
<dbReference type="InterPro" id="IPR000300">
    <property type="entry name" value="IPPc"/>
</dbReference>
<dbReference type="InterPro" id="IPR015943">
    <property type="entry name" value="WD40/YVTN_repeat-like_dom_sf"/>
</dbReference>
<dbReference type="InterPro" id="IPR001680">
    <property type="entry name" value="WD40_rpt"/>
</dbReference>
<dbReference type="PANTHER" id="PTHR11200">
    <property type="entry name" value="INOSITOL 5-PHOSPHATASE"/>
    <property type="match status" value="1"/>
</dbReference>
<dbReference type="PANTHER" id="PTHR11200:SF268">
    <property type="entry name" value="TYPE II INOSITOL POLYPHOSPHATE 5-PHOSPHATASE 14"/>
    <property type="match status" value="1"/>
</dbReference>
<dbReference type="Pfam" id="PF23754">
    <property type="entry name" value="Beta-prop_IP5PC_F"/>
    <property type="match status" value="1"/>
</dbReference>
<dbReference type="Pfam" id="PF22669">
    <property type="entry name" value="Exo_endo_phos2"/>
    <property type="match status" value="1"/>
</dbReference>
<dbReference type="Pfam" id="PF23755">
    <property type="entry name" value="Ig-like_IP5PC_F"/>
    <property type="match status" value="1"/>
</dbReference>
<dbReference type="SMART" id="SM00128">
    <property type="entry name" value="IPPc"/>
    <property type="match status" value="1"/>
</dbReference>
<dbReference type="SMART" id="SM00320">
    <property type="entry name" value="WD40"/>
    <property type="match status" value="4"/>
</dbReference>
<dbReference type="SUPFAM" id="SSF56219">
    <property type="entry name" value="DNase I-like"/>
    <property type="match status" value="1"/>
</dbReference>
<dbReference type="SUPFAM" id="SSF101908">
    <property type="entry name" value="Putative isomerase YbhE"/>
    <property type="match status" value="1"/>
</dbReference>
<accession>Q9SKB7</accession>